<dbReference type="EC" id="5.6.2.3" evidence="1"/>
<dbReference type="EMBL" id="CP000026">
    <property type="protein sequence ID" value="AAV77842.1"/>
    <property type="molecule type" value="Genomic_DNA"/>
</dbReference>
<dbReference type="RefSeq" id="WP_001218627.1">
    <property type="nucleotide sequence ID" value="NC_006511.1"/>
</dbReference>
<dbReference type="SMR" id="Q5PG19"/>
<dbReference type="KEGG" id="spt:SPA1932"/>
<dbReference type="HOGENOM" id="CLU_012117_4_1_6"/>
<dbReference type="Proteomes" id="UP000008185">
    <property type="component" value="Chromosome"/>
</dbReference>
<dbReference type="GO" id="GO:0051539">
    <property type="term" value="F:4 iron, 4 sulfur cluster binding"/>
    <property type="evidence" value="ECO:0007669"/>
    <property type="project" value="UniProtKB-UniRule"/>
</dbReference>
<dbReference type="GO" id="GO:0043139">
    <property type="term" value="F:5'-3' DNA helicase activity"/>
    <property type="evidence" value="ECO:0007669"/>
    <property type="project" value="UniProtKB-UniRule"/>
</dbReference>
<dbReference type="GO" id="GO:0005524">
    <property type="term" value="F:ATP binding"/>
    <property type="evidence" value="ECO:0007669"/>
    <property type="project" value="UniProtKB-UniRule"/>
</dbReference>
<dbReference type="GO" id="GO:0016887">
    <property type="term" value="F:ATP hydrolysis activity"/>
    <property type="evidence" value="ECO:0007669"/>
    <property type="project" value="RHEA"/>
</dbReference>
<dbReference type="GO" id="GO:0003677">
    <property type="term" value="F:DNA binding"/>
    <property type="evidence" value="ECO:0007669"/>
    <property type="project" value="UniProtKB-UniRule"/>
</dbReference>
<dbReference type="GO" id="GO:0033677">
    <property type="term" value="F:DNA/RNA helicase activity"/>
    <property type="evidence" value="ECO:0007669"/>
    <property type="project" value="TreeGrafter"/>
</dbReference>
<dbReference type="GO" id="GO:0046872">
    <property type="term" value="F:metal ion binding"/>
    <property type="evidence" value="ECO:0007669"/>
    <property type="project" value="UniProtKB-KW"/>
</dbReference>
<dbReference type="GO" id="GO:0006281">
    <property type="term" value="P:DNA repair"/>
    <property type="evidence" value="ECO:0007669"/>
    <property type="project" value="TreeGrafter"/>
</dbReference>
<dbReference type="GO" id="GO:0009432">
    <property type="term" value="P:SOS response"/>
    <property type="evidence" value="ECO:0007669"/>
    <property type="project" value="TreeGrafter"/>
</dbReference>
<dbReference type="FunFam" id="3.40.50.300:FF:000685">
    <property type="entry name" value="ATP-dependent DNA helicase DinG"/>
    <property type="match status" value="1"/>
</dbReference>
<dbReference type="FunFam" id="3.40.50.300:FF:000700">
    <property type="entry name" value="ATP-dependent DNA helicase DinG"/>
    <property type="match status" value="1"/>
</dbReference>
<dbReference type="Gene3D" id="3.40.50.300">
    <property type="entry name" value="P-loop containing nucleotide triphosphate hydrolases"/>
    <property type="match status" value="2"/>
</dbReference>
<dbReference type="HAMAP" id="MF_02205">
    <property type="entry name" value="DinG_proteobact"/>
    <property type="match status" value="1"/>
</dbReference>
<dbReference type="InterPro" id="IPR006555">
    <property type="entry name" value="ATP-dep_Helicase_C"/>
</dbReference>
<dbReference type="InterPro" id="IPR011545">
    <property type="entry name" value="DEAD/DEAH_box_helicase_dom"/>
</dbReference>
<dbReference type="InterPro" id="IPR045028">
    <property type="entry name" value="DinG/Rad3-like"/>
</dbReference>
<dbReference type="InterPro" id="IPR039000">
    <property type="entry name" value="DinG_proteobact"/>
</dbReference>
<dbReference type="InterPro" id="IPR014013">
    <property type="entry name" value="Helic_SF1/SF2_ATP-bd_DinG/Rad3"/>
</dbReference>
<dbReference type="InterPro" id="IPR006554">
    <property type="entry name" value="Helicase-like_DEXD_c2"/>
</dbReference>
<dbReference type="InterPro" id="IPR014001">
    <property type="entry name" value="Helicase_ATP-bd"/>
</dbReference>
<dbReference type="InterPro" id="IPR027417">
    <property type="entry name" value="P-loop_NTPase"/>
</dbReference>
<dbReference type="InterPro" id="IPR010614">
    <property type="entry name" value="RAD3-like_helicase_DEAD"/>
</dbReference>
<dbReference type="NCBIfam" id="NF008729">
    <property type="entry name" value="PRK11747.1"/>
    <property type="match status" value="1"/>
</dbReference>
<dbReference type="PANTHER" id="PTHR11472:SF59">
    <property type="entry name" value="ATP-DEPENDENT DNA HELICASE DING"/>
    <property type="match status" value="1"/>
</dbReference>
<dbReference type="PANTHER" id="PTHR11472">
    <property type="entry name" value="DNA REPAIR DEAD HELICASE RAD3/XP-D SUBFAMILY MEMBER"/>
    <property type="match status" value="1"/>
</dbReference>
<dbReference type="Pfam" id="PF00270">
    <property type="entry name" value="DEAD"/>
    <property type="match status" value="1"/>
</dbReference>
<dbReference type="Pfam" id="PF06733">
    <property type="entry name" value="DEAD_2"/>
    <property type="match status" value="1"/>
</dbReference>
<dbReference type="Pfam" id="PF13307">
    <property type="entry name" value="Helicase_C_2"/>
    <property type="match status" value="1"/>
</dbReference>
<dbReference type="SMART" id="SM00487">
    <property type="entry name" value="DEXDc"/>
    <property type="match status" value="1"/>
</dbReference>
<dbReference type="SMART" id="SM00488">
    <property type="entry name" value="DEXDc2"/>
    <property type="match status" value="1"/>
</dbReference>
<dbReference type="SMART" id="SM00491">
    <property type="entry name" value="HELICc2"/>
    <property type="match status" value="1"/>
</dbReference>
<dbReference type="SUPFAM" id="SSF52540">
    <property type="entry name" value="P-loop containing nucleoside triphosphate hydrolases"/>
    <property type="match status" value="1"/>
</dbReference>
<dbReference type="PROSITE" id="PS51193">
    <property type="entry name" value="HELICASE_ATP_BIND_2"/>
    <property type="match status" value="1"/>
</dbReference>
<dbReference type="PROSITE" id="PS51194">
    <property type="entry name" value="HELICASE_CTER"/>
    <property type="match status" value="1"/>
</dbReference>
<keyword id="KW-0004">4Fe-4S</keyword>
<keyword id="KW-0067">ATP-binding</keyword>
<keyword id="KW-0238">DNA-binding</keyword>
<keyword id="KW-0347">Helicase</keyword>
<keyword id="KW-0378">Hydrolase</keyword>
<keyword id="KW-0408">Iron</keyword>
<keyword id="KW-0411">Iron-sulfur</keyword>
<keyword id="KW-0413">Isomerase</keyword>
<keyword id="KW-0479">Metal-binding</keyword>
<keyword id="KW-0547">Nucleotide-binding</keyword>
<feature type="chain" id="PRO_0000102000" description="ATP-dependent DNA helicase DinG">
    <location>
        <begin position="1"/>
        <end position="714"/>
    </location>
</feature>
<feature type="domain" description="Helicase ATP-binding" evidence="1">
    <location>
        <begin position="17"/>
        <end position="294"/>
    </location>
</feature>
<feature type="domain" description="Helicase C-terminal" evidence="1">
    <location>
        <begin position="517"/>
        <end position="698"/>
    </location>
</feature>
<feature type="short sequence motif" description="DEAH box" evidence="1">
    <location>
        <begin position="248"/>
        <end position="251"/>
    </location>
</feature>
<feature type="binding site" evidence="1 2">
    <location>
        <begin position="54"/>
        <end position="61"/>
    </location>
    <ligand>
        <name>ATP</name>
        <dbReference type="ChEBI" id="CHEBI:30616"/>
    </ligand>
</feature>
<feature type="binding site" evidence="1">
    <location>
        <position position="120"/>
    </location>
    <ligand>
        <name>[4Fe-4S] cluster</name>
        <dbReference type="ChEBI" id="CHEBI:49883"/>
    </ligand>
</feature>
<feature type="binding site" evidence="1">
    <location>
        <position position="194"/>
    </location>
    <ligand>
        <name>[4Fe-4S] cluster</name>
        <dbReference type="ChEBI" id="CHEBI:49883"/>
    </ligand>
</feature>
<feature type="binding site" evidence="1">
    <location>
        <position position="199"/>
    </location>
    <ligand>
        <name>[4Fe-4S] cluster</name>
        <dbReference type="ChEBI" id="CHEBI:49883"/>
    </ligand>
</feature>
<feature type="binding site" evidence="1">
    <location>
        <position position="205"/>
    </location>
    <ligand>
        <name>[4Fe-4S] cluster</name>
        <dbReference type="ChEBI" id="CHEBI:49883"/>
    </ligand>
</feature>
<comment type="function">
    <text evidence="1">DNA-dependent ATPase and 5'-3' DNA helicase. Unwinds D-loops, R-loops, forked DNA and G-quadruplex DNA.</text>
</comment>
<comment type="catalytic activity">
    <reaction evidence="1">
        <text>Couples ATP hydrolysis with the unwinding of duplex DNA at the replication fork by translocating in the 5'-3' direction. This creates two antiparallel DNA single strands (ssDNA). The leading ssDNA polymer is the template for DNA polymerase III holoenzyme which synthesizes a continuous strand.</text>
        <dbReference type="EC" id="5.6.2.3"/>
    </reaction>
</comment>
<comment type="catalytic activity">
    <reaction evidence="1">
        <text>ATP + H2O = ADP + phosphate + H(+)</text>
        <dbReference type="Rhea" id="RHEA:13065"/>
        <dbReference type="ChEBI" id="CHEBI:15377"/>
        <dbReference type="ChEBI" id="CHEBI:15378"/>
        <dbReference type="ChEBI" id="CHEBI:30616"/>
        <dbReference type="ChEBI" id="CHEBI:43474"/>
        <dbReference type="ChEBI" id="CHEBI:456216"/>
        <dbReference type="EC" id="5.6.2.3"/>
    </reaction>
</comment>
<comment type="cofactor">
    <cofactor evidence="1">
        <name>[4Fe-4S] cluster</name>
        <dbReference type="ChEBI" id="CHEBI:49883"/>
    </cofactor>
    <text evidence="1">Binds 1 [4Fe-4S] cluster.</text>
</comment>
<comment type="similarity">
    <text evidence="1">Belongs to the helicase family. DinG subfamily. Type 1 sub-subfamily.</text>
</comment>
<protein>
    <recommendedName>
        <fullName evidence="1">ATP-dependent DNA helicase DinG</fullName>
        <ecNumber evidence="1">5.6.2.3</ecNumber>
    </recommendedName>
    <alternativeName>
        <fullName evidence="1">DNA 5'-3' helicase subunit DinG</fullName>
    </alternativeName>
</protein>
<sequence>MALTAALKAQIAAWYKALQDQIPDFIPRAPQRQMIADVARTLAGEEGRHLAIEAPTGVGKTLSYLIPGIAIAREEQKTLVVSTANVALQDQIFSKDLPLLRKIIPDLRFTAAFGRGRYVCPRNLAALASSEPTQQDLLAFLDDELTPNNQEEQKRCARLKGDLDGYKWDGLRDHTDIAIDDDLWRRLSTDKASCLNRNCHYYRECPFFVARREIQEAEVVVANHALVMAAMESEAVLPEPKHLLLVLDEGHHLPDVARDALEMSAEITASWYRLQLDLFSKLVATCMEQFRPKTTPPLANPERLNAHCEEVYELIASLNAILNLYMPAAQEAEHRFAMGELPDEVMEICQRLAKLTETLRGLAESFLNDLSEKTGSHDIMRLHRVILQMNRALGMFEAQSKLWRLASMAQSSGAPVSKWATREIREGQLHVWFHCVGIRVSEQLERLLWCSVPHIIVTSATLRSLNSFSRLQEMSGLKEKAGDRFVALDSPFNHVEQGKLVIPQMRYEPTIDNEEQHIAEMAAYFREQLESKKHHGMLVLFASGRAMQRFLEHVADVRLLLLVQGDQPRYRLVELHRKRVESGERSVLVGLQSFAEGLDLKGELLTQVHIHKIAFPPIDSPVVITEGEWLKSLNRYPFEVQSLPSASFNLIQQVGRLIRSHACRGEVVIYDKRLLTKNYGQRLLNALPVFPIEQPAVPDVIVKPKAKPARRRRR</sequence>
<accession>Q5PG19</accession>
<evidence type="ECO:0000255" key="1">
    <source>
        <dbReference type="HAMAP-Rule" id="MF_02205"/>
    </source>
</evidence>
<evidence type="ECO:0000305" key="2"/>
<name>DING_SALPA</name>
<reference key="1">
    <citation type="journal article" date="2004" name="Nat. Genet.">
        <title>Comparison of genome degradation in Paratyphi A and Typhi, human-restricted serovars of Salmonella enterica that cause typhoid.</title>
        <authorList>
            <person name="McClelland M."/>
            <person name="Sanderson K.E."/>
            <person name="Clifton S.W."/>
            <person name="Latreille P."/>
            <person name="Porwollik S."/>
            <person name="Sabo A."/>
            <person name="Meyer R."/>
            <person name="Bieri T."/>
            <person name="Ozersky P."/>
            <person name="McLellan M."/>
            <person name="Harkins C.R."/>
            <person name="Wang C."/>
            <person name="Nguyen C."/>
            <person name="Berghoff A."/>
            <person name="Elliott G."/>
            <person name="Kohlberg S."/>
            <person name="Strong C."/>
            <person name="Du F."/>
            <person name="Carter J."/>
            <person name="Kremizki C."/>
            <person name="Layman D."/>
            <person name="Leonard S."/>
            <person name="Sun H."/>
            <person name="Fulton L."/>
            <person name="Nash W."/>
            <person name="Miner T."/>
            <person name="Minx P."/>
            <person name="Delehaunty K."/>
            <person name="Fronick C."/>
            <person name="Magrini V."/>
            <person name="Nhan M."/>
            <person name="Warren W."/>
            <person name="Florea L."/>
            <person name="Spieth J."/>
            <person name="Wilson R.K."/>
        </authorList>
    </citation>
    <scope>NUCLEOTIDE SEQUENCE [LARGE SCALE GENOMIC DNA]</scope>
    <source>
        <strain>ATCC 9150 / SARB42</strain>
    </source>
</reference>
<gene>
    <name evidence="1" type="primary">dinG</name>
    <name type="ordered locus">SPA1932</name>
</gene>
<organism>
    <name type="scientific">Salmonella paratyphi A (strain ATCC 9150 / SARB42)</name>
    <dbReference type="NCBI Taxonomy" id="295319"/>
    <lineage>
        <taxon>Bacteria</taxon>
        <taxon>Pseudomonadati</taxon>
        <taxon>Pseudomonadota</taxon>
        <taxon>Gammaproteobacteria</taxon>
        <taxon>Enterobacterales</taxon>
        <taxon>Enterobacteriaceae</taxon>
        <taxon>Salmonella</taxon>
    </lineage>
</organism>
<proteinExistence type="inferred from homology"/>